<feature type="chain" id="PRO_0000222025" description="RNA-directed RNA polymerase L">
    <location>
        <begin position="1"/>
        <end position="2095"/>
    </location>
</feature>
<feature type="domain" description="RdRp catalytic" evidence="6">
    <location>
        <begin position="976"/>
        <end position="1167"/>
    </location>
</feature>
<feature type="region of interest" description="Endonuclease" evidence="7">
    <location>
        <begin position="1"/>
        <end position="205"/>
    </location>
</feature>
<feature type="region of interest" description="Cap-binding" evidence="2">
    <location>
        <begin position="1704"/>
        <end position="1819"/>
    </location>
</feature>
<feature type="active site" description="For endonuclease activity" evidence="11">
    <location>
        <position position="145"/>
    </location>
</feature>
<feature type="binding site" evidence="7">
    <location>
        <position position="78"/>
    </location>
    <ligand>
        <name>Mn(2+)</name>
        <dbReference type="ChEBI" id="CHEBI:29035"/>
        <label>1</label>
    </ligand>
</feature>
<feature type="binding site" evidence="7">
    <location>
        <position position="113"/>
    </location>
    <ligand>
        <name>Mn(2+)</name>
        <dbReference type="ChEBI" id="CHEBI:29035"/>
        <label>1</label>
    </ligand>
</feature>
<feature type="binding site" evidence="7">
    <location>
        <position position="113"/>
    </location>
    <ligand>
        <name>Mn(2+)</name>
        <dbReference type="ChEBI" id="CHEBI:29035"/>
        <label>2</label>
    </ligand>
</feature>
<feature type="binding site" evidence="7">
    <location>
        <position position="127"/>
    </location>
    <ligand>
        <name>Mn(2+)</name>
        <dbReference type="ChEBI" id="CHEBI:29035"/>
        <label>1</label>
    </ligand>
</feature>
<feature type="binding site" evidence="3">
    <location>
        <position position="1135"/>
    </location>
    <ligand>
        <name>Mg(2+)</name>
        <dbReference type="ChEBI" id="CHEBI:18420"/>
        <note>catalytic; for RdRp activity</note>
    </ligand>
</feature>
<feature type="site" description="Interaction with the cap substrate" evidence="1">
    <location>
        <position position="1711"/>
    </location>
</feature>
<feature type="site" description="Interaction with the cap substrate" evidence="1">
    <location>
        <position position="1715"/>
    </location>
</feature>
<feature type="site" description="Interaction with the cap substrate" evidence="1">
    <location>
        <position position="1726"/>
    </location>
</feature>
<feature type="site" description="Interaction with the cap substrate" evidence="1">
    <location>
        <position position="1780"/>
    </location>
</feature>
<feature type="mutagenesis site" description="Complete loss of endonuclease activity." evidence="7">
    <original>H</original>
    <variation>A</variation>
    <location>
        <position position="78"/>
    </location>
</feature>
<feature type="mutagenesis site" description="Complete loss of endonuclease activity." evidence="7">
    <original>D</original>
    <variation>A</variation>
    <location>
        <position position="90"/>
    </location>
</feature>
<feature type="mutagenesis site" description="Complete loss of endonuclease activity." evidence="7">
    <original>D</original>
    <variation>A</variation>
    <location>
        <position position="113"/>
    </location>
</feature>
<feature type="mutagenesis site" description="Complete loss of endonuclease activity." evidence="7">
    <original>E</original>
    <variation>A</variation>
    <location>
        <position position="127"/>
    </location>
</feature>
<feature type="mutagenesis site" description="Complete loss of endonuclease activity." evidence="7">
    <original>K</original>
    <variation>A</variation>
    <location>
        <position position="145"/>
    </location>
</feature>
<feature type="mutagenesis site" description="Complete loss of endonuclease activity.">
    <original>K</original>
    <variation>A</variation>
    <location>
        <position position="148"/>
    </location>
</feature>
<feature type="helix" evidence="15">
    <location>
        <begin position="4"/>
        <end position="7"/>
    </location>
</feature>
<feature type="strand" evidence="16">
    <location>
        <begin position="15"/>
        <end position="17"/>
    </location>
</feature>
<feature type="strand" evidence="15">
    <location>
        <begin position="21"/>
        <end position="24"/>
    </location>
</feature>
<feature type="strand" evidence="15">
    <location>
        <begin position="35"/>
        <end position="38"/>
    </location>
</feature>
<feature type="strand" evidence="15">
    <location>
        <begin position="45"/>
        <end position="48"/>
    </location>
</feature>
<feature type="helix" evidence="15">
    <location>
        <begin position="50"/>
        <end position="52"/>
    </location>
</feature>
<feature type="turn" evidence="15">
    <location>
        <begin position="58"/>
        <end position="61"/>
    </location>
</feature>
<feature type="strand" evidence="15">
    <location>
        <begin position="64"/>
        <end position="67"/>
    </location>
</feature>
<feature type="helix" evidence="16">
    <location>
        <begin position="70"/>
        <end position="72"/>
    </location>
</feature>
<feature type="helix" evidence="15">
    <location>
        <begin position="76"/>
        <end position="81"/>
    </location>
</feature>
<feature type="turn" evidence="15">
    <location>
        <begin position="82"/>
        <end position="85"/>
    </location>
</feature>
<feature type="helix" evidence="15">
    <location>
        <begin position="93"/>
        <end position="97"/>
    </location>
</feature>
<feature type="strand" evidence="16">
    <location>
        <begin position="100"/>
        <end position="103"/>
    </location>
</feature>
<feature type="helix" evidence="15">
    <location>
        <begin position="106"/>
        <end position="109"/>
    </location>
</feature>
<feature type="strand" evidence="15">
    <location>
        <begin position="113"/>
        <end position="117"/>
    </location>
</feature>
<feature type="strand" evidence="15">
    <location>
        <begin position="123"/>
        <end position="130"/>
    </location>
</feature>
<feature type="helix" evidence="15">
    <location>
        <begin position="135"/>
        <end position="156"/>
    </location>
</feature>
<feature type="turn" evidence="15">
    <location>
        <begin position="157"/>
        <end position="159"/>
    </location>
</feature>
<feature type="strand" evidence="15">
    <location>
        <begin position="162"/>
        <end position="170"/>
    </location>
</feature>
<feature type="strand" evidence="15">
    <location>
        <begin position="173"/>
        <end position="178"/>
    </location>
</feature>
<feature type="helix" evidence="15">
    <location>
        <begin position="182"/>
        <end position="202"/>
    </location>
</feature>
<protein>
    <recommendedName>
        <fullName>RNA-directed RNA polymerase L</fullName>
        <shortName>Protein L</shortName>
        <ecNumber evidence="3">2.7.7.48</ecNumber>
    </recommendedName>
    <alternativeName>
        <fullName>Large structural protein</fullName>
    </alternativeName>
    <alternativeName>
        <fullName>Replicase</fullName>
    </alternativeName>
    <alternativeName>
        <fullName>Transcriptase</fullName>
    </alternativeName>
    <domain>
        <recommendedName>
            <fullName>cap-snatching endonuclease</fullName>
            <ecNumber evidence="7">3.1.-.-</ecNumber>
        </recommendedName>
    </domain>
</protein>
<comment type="function">
    <text evidence="2 3 5 7">RNA-dependent RNA polymerase, which is responsible for the replication and transcription of the viral RNA genome using antigenomic RNA as an intermediate (By similarity). During transcription, synthesizes subgenomic RNAs and assures their capping by a cap-snatching mechanism, which involves the endonuclease activity cleaving the host capped pre-mRNAs (PubMed:31584100). These short capped RNAs are then used as primers for viral transcription. The 3'-end of subgenomic mRNAs molecules are not polyadenylated. During replication, the polymerase binds the 5' and 3' vRNA extremities at distinct sites (By similarity). In turn, significant conformational changes occur in the polymerase and in vRNA to initiate active RNA synthesis (By similarity). As a consequence of the use of the same enzyme for both transcription and replication, these mechanisms need to be well coordinated (By similarity).</text>
</comment>
<comment type="catalytic activity">
    <reaction evidence="6">
        <text>RNA(n) + a ribonucleoside 5'-triphosphate = RNA(n+1) + diphosphate</text>
        <dbReference type="Rhea" id="RHEA:21248"/>
        <dbReference type="Rhea" id="RHEA-COMP:14527"/>
        <dbReference type="Rhea" id="RHEA-COMP:17342"/>
        <dbReference type="ChEBI" id="CHEBI:33019"/>
        <dbReference type="ChEBI" id="CHEBI:61557"/>
        <dbReference type="ChEBI" id="CHEBI:140395"/>
        <dbReference type="EC" id="2.7.7.48"/>
    </reaction>
</comment>
<comment type="cofactor">
    <cofactor evidence="7">
        <name>Mn(2+)</name>
        <dbReference type="ChEBI" id="CHEBI:29035"/>
    </cofactor>
    <text evidence="7 8">For endonuclease activity. Binds 2 Mn(2+) ions in the active site (PubMed:31584100). The divalent metal ions are crucial for catalytic activity (PubMed:31584100, PubMed:31948728).</text>
</comment>
<comment type="cofactor">
    <cofactor evidence="5">
        <name>Mg(2+)</name>
        <dbReference type="ChEBI" id="CHEBI:18420"/>
    </cofactor>
    <cofactor evidence="5">
        <name>Mn(2+)</name>
        <dbReference type="ChEBI" id="CHEBI:29035"/>
    </cofactor>
    <text evidence="5">For polymerase activity. Initiation activity is stronger in the presence of Mn(2+) than in the presence of Mg(2+).</text>
</comment>
<comment type="subunit">
    <text evidence="5">Homomultimer (By similarity). Interacts with glycoprotein N; this interaction allows efficient polymerase packaging into virus particles (By similarity). Interacts with nucleoprotein N (By similarity).</text>
</comment>
<comment type="subcellular location">
    <subcellularLocation>
        <location evidence="3">Host Golgi apparatus</location>
    </subcellularLocation>
    <subcellularLocation>
        <location evidence="3">Host endoplasmic reticulum</location>
    </subcellularLocation>
    <subcellularLocation>
        <location evidence="3">Host endoplasmic reticulum-Golgi intermediate compartment</location>
    </subcellularLocation>
    <subcellularLocation>
        <location evidence="4">Virion</location>
    </subcellularLocation>
</comment>
<comment type="domain">
    <text evidence="1 3 7">The N-terminus contains the endonuclease activity (endoN) (PubMed:31584100). The central region contains the RdRp activity (By similarity). The C-terminus contains the cap-binding region (By similarity).</text>
</comment>
<comment type="miscellaneous">
    <text evidence="9">Classified as His(+) endonuclease since it has a histidine upstream of the active site that coordinates the first cation.</text>
</comment>
<comment type="similarity">
    <text evidence="10">Belongs to the Bunyavirales RNA polymerase family.</text>
</comment>
<accession>P37800</accession>
<name>L_TOSV</name>
<organism>
    <name type="scientific">Toscana virus</name>
    <name type="common">Tos</name>
    <dbReference type="NCBI Taxonomy" id="11590"/>
    <lineage>
        <taxon>Viruses</taxon>
        <taxon>Riboviria</taxon>
        <taxon>Orthornavirae</taxon>
        <taxon>Negarnaviricota</taxon>
        <taxon>Polyploviricotina</taxon>
        <taxon>Ellioviricetes</taxon>
        <taxon>Bunyavirales</taxon>
        <taxon>Phenuiviridae</taxon>
        <taxon>Phlebovirus</taxon>
        <taxon>Phlebovirus toscanaense</taxon>
    </lineage>
</organism>
<sequence length="2095" mass="238887">MERILKKQPAPVRALTIHPLRRYESSIYDTPIPAYVIKHSSDGVTIDIATSELADGQSGSTIQPFESVPAQNLTLFKHDFTFGHLADTTDKKFVEVFGVLENRADDSDFQSPDMIIETETGHVYVVEFTTTMGDANSADLAARNKIAKYEIACLNRSAIKPISLYIIAVHFNGVISNLDLSDEEVNEIVFRFRLARDIFEELREINPALFDSDETISRLEREVNSVMSAIQIDWDTTEKKFPSFRRELFENFRSKEVDDEYISKIIKRCTDEALRGIERDSLYTEDITNKERFELNSKRAASDIKNKMAEMMSYEFLRDTEDHKSTVQFPPWVTRTGPAGKDLEPLKSVSVEGSHPMCKIWNKVCTNASIEKIERMHDDPVLELEYAMSGSTERSVERNKYHRTVLTLSPEEREYAAVLGVCGKRNANLGAVKEARVRSKKGFSIGHNTERVEEFLSDSCVEDLIPTEGLYNPLSEDKSLRLLAMGLHQPTLIHMDDETPETLDCHLKFLSSPIGSWLQMVSIVGAELSASVKQHVKPNQFIVKRLLDSAIFLLIKPTTSKGHIFVSLAVNKKFLHGELSKSSVFKQSIDAGDLLVTDFVSFKLSKITNLCKALCVLEAASCFWAETYGFEPWKFVDQASAVKFLDAWFMIKLSLLTMLEDKATTEELQTMQRYVIMEGFVSLPEIPKPHKMLSKIPKVLRSELQVFLTHRLFSTMQRISATPFQLHKVGGNIRWKGLFNPYSGNSIDELQTLISCCYNGYFKNKEEDTEPSALSAMYKKIIELEHLRPPTDTYLGYEDPIDPKMHEFSRSYLKLLCNHAKTKLRKQYGRGVMNQIENSIVREVQSITLERLATLKATSNFDDSWYTFKDVKDKNYTRDKLLVKMTQFAHRGKTLAIEVFEECMSRIEEKGCMEICLFKKQQHGGLREIYVMGADERIVQSVIEAIARAIGRFFDSDTLCNPSNKIRIPETHGQRAKRRCGRSVWTCATSDDARKWNQGHYVTKFALMLCEFTPQEWWPLIIRGCSMFTNKFMMMNLDFLRIIDSHKELQIEDEFVSKLFKAYHGESVEPWISQGCTYLKTSTGMMQGILHFTSSLLHSLHQEFVKTTAIQLFTLKLGSDASSKVVCDMMQGSDDSSMIISFPSYNEKIKMRYKLVAAMCFRIKKSLGIYIGIYPSEKSTPNTDFVMEYNSEFFFHSQHVRPTIRWIAASCSLPEVETLVASKEEAANLLTAITEGGGSFSLAAMIQHCQSSIHYMLMGLGVSALFSEFSKAISKWLDPGLGFFLFDNPYSAGLSGFKYNLYRAIMNSSLKSIYSFFMKRVKGGSQRTDGIISESCSVSPGGAIVMSSTLRWGSVEKFKRLRNRLNIPETWKEMINESPEVLYRAPQTGTEIMLRIAEKVHSPGVVSSLSTGNAVCKVMASSVYFLSACIFEDAGSQEYKVVNNDKYSLMQKIIAFDQIGCNDEISQEDLLFLFPNLAEFEAFDSIIYDKGRFNVIPRASQREATQTRIVVFEHHSSARVAPEKLVSDKWFGTRKSKIGSPGFRQEWDRLKAIVRWLRDTPEETLDSSPFSNHIQIRNFFARMEGRPRVIKVTGAPVKRDLGMSKIAMAIRDNFCKTGFLQGLEDEVGHSRAMQVEKIKHYLFSVLMGPYSEEAKLEYVVKILKEEPQVILNYNDKRSRANIISLLQRFIKSEIGIATLIEDMKAGVFGAFVKAQQFSQSSVNNKYYGRGIWKGVMDGYQVQIDIDGKEGMPSHLSGITISNCSKTWILTQSLKAWCEDMQVYNNTDVSKANPKANYWMYGFKMYGSSYPYGCPIYLVRHDITNLGLLHDDDIDIKVRRNTINLFVRSKDKRPRDLHILSYTPSDSDISSVSSKHIMEDEYFVYKGAFSVEPTRSWMLCQPLPWSFVRPVLQVATGSRRSPRQLDLERLREIIRLCTESSIRNKVGTVYGQNRPEKFIEAEPIDMSEMFDMMLDEGMDDAFEELADYLTVEEDPDYMDEVSFDDDSLNLFGPAHYKELQSLTVLAHPLMDDFVTRLVGKMGRPQIRRLLEKNVTTRDLRELSELLFMALDRDPSQIREELILGDSPTEVPDDLLG</sequence>
<reference key="1">
    <citation type="journal article" date="1993" name="Virus Res.">
        <title>Toscana virus genomic L segment: molecular cloning, coding strategy and amino acid sequence in comparison with other negative strand RNA viruses.</title>
        <authorList>
            <person name="Accardi L."/>
            <person name="Gro M.C."/>
            <person name="di Bonito P."/>
            <person name="Giorgi C."/>
        </authorList>
    </citation>
    <scope>NUCLEOTIDE SEQUENCE [GENOMIC RNA]</scope>
    <source>
        <strain>ISS.PHL.3</strain>
    </source>
</reference>
<reference key="2">
    <citation type="journal article" date="2017" name="Crit. Rev. Microbiol.">
        <title>Bunyaviridae RdRps: structure, motifs, and RNA synthesis machinery.</title>
        <authorList>
            <person name="Amroun A."/>
            <person name="Priet S."/>
            <person name="de Lamballerie X."/>
            <person name="Querat G."/>
        </authorList>
    </citation>
    <scope>REVIEW</scope>
</reference>
<reference key="3">
    <citation type="journal article" date="2020" name="Trends Microbiol.">
        <title>The Cap-Snatching Mechanism of Bunyaviruses.</title>
        <authorList>
            <person name="Olschewski S."/>
            <person name="Cusack S."/>
            <person name="Rosenthal M."/>
        </authorList>
    </citation>
    <scope>REVIEW</scope>
</reference>
<reference evidence="12 13 14" key="4">
    <citation type="journal article" date="2019" name="Nucleic Acids Res.">
        <title>Structure and function of the Toscana virus cap-snatching endonuclease.</title>
        <authorList>
            <person name="Jones R."/>
            <person name="Lessoued S."/>
            <person name="Meier K."/>
            <person name="Devignot S."/>
            <person name="Barata-Garcia S."/>
            <person name="Mate M."/>
            <person name="Bragagnolo G."/>
            <person name="Weber F."/>
            <person name="Rosenthal M."/>
            <person name="Reguera J."/>
        </authorList>
    </citation>
    <scope>X-RAY CRYSTALLOGRAPHY (1.50 ANGSTROMS) OF 1-211</scope>
    <scope>DOMAIN</scope>
    <scope>CATALYTIC ACTIVITY</scope>
    <scope>COFACTOR</scope>
    <scope>MUTAGENESIS OF HIS-78; ASP-90; ASP-113; GLU-127; LYS-145 AND LYS-148</scope>
    <scope>FUNCTION</scope>
    <source>
        <strain evidence="10">France AR 2005</strain>
    </source>
</reference>
<organismHost>
    <name type="scientific">Homo sapiens</name>
    <name type="common">Human</name>
    <dbReference type="NCBI Taxonomy" id="9606"/>
</organismHost>
<organismHost>
    <name type="scientific">Phlebotomus perniciosus</name>
    <name type="common">Phlebotomine sand fly</name>
    <dbReference type="NCBI Taxonomy" id="13204"/>
</organismHost>
<gene>
    <name type="primary">L</name>
</gene>
<keyword id="KW-0002">3D-structure</keyword>
<keyword id="KW-1038">Host endoplasmic reticulum</keyword>
<keyword id="KW-1040">Host Golgi apparatus</keyword>
<keyword id="KW-0378">Hydrolase</keyword>
<keyword id="KW-0460">Magnesium</keyword>
<keyword id="KW-0464">Manganese</keyword>
<keyword id="KW-0479">Metal-binding</keyword>
<keyword id="KW-0547">Nucleotide-binding</keyword>
<keyword id="KW-0548">Nucleotidyltransferase</keyword>
<keyword id="KW-1185">Reference proteome</keyword>
<keyword id="KW-0696">RNA-directed RNA polymerase</keyword>
<keyword id="KW-0808">Transferase</keyword>
<keyword id="KW-0693">Viral RNA replication</keyword>
<keyword id="KW-0946">Virion</keyword>
<dbReference type="EC" id="2.7.7.48" evidence="3"/>
<dbReference type="EC" id="3.1.-.-" evidence="7"/>
<dbReference type="EMBL" id="X68414">
    <property type="protein sequence ID" value="CAA48478.1"/>
    <property type="molecule type" value="Genomic_RNA"/>
</dbReference>
<dbReference type="PIR" id="S29529">
    <property type="entry name" value="S29529"/>
</dbReference>
<dbReference type="PDB" id="6QVV">
    <property type="method" value="X-ray"/>
    <property type="resolution" value="2.40 A"/>
    <property type="chains" value="A/B=1-211"/>
</dbReference>
<dbReference type="PDB" id="6QW0">
    <property type="method" value="X-ray"/>
    <property type="resolution" value="1.50 A"/>
    <property type="chains" value="A/B=1-211"/>
</dbReference>
<dbReference type="PDB" id="6QW5">
    <property type="method" value="X-ray"/>
    <property type="resolution" value="1.99 A"/>
    <property type="chains" value="A/B=1-211"/>
</dbReference>
<dbReference type="PDBsum" id="6QVV"/>
<dbReference type="PDBsum" id="6QW0"/>
<dbReference type="PDBsum" id="6QW5"/>
<dbReference type="SMR" id="P37800"/>
<dbReference type="KEGG" id="vg:3077272"/>
<dbReference type="Proteomes" id="UP000204292">
    <property type="component" value="Genome"/>
</dbReference>
<dbReference type="GO" id="GO:0044165">
    <property type="term" value="C:host cell endoplasmic reticulum"/>
    <property type="evidence" value="ECO:0007669"/>
    <property type="project" value="UniProtKB-SubCell"/>
</dbReference>
<dbReference type="GO" id="GO:0044172">
    <property type="term" value="C:host cell endoplasmic reticulum-Golgi intermediate compartment"/>
    <property type="evidence" value="ECO:0007669"/>
    <property type="project" value="UniProtKB-SubCell"/>
</dbReference>
<dbReference type="GO" id="GO:0044177">
    <property type="term" value="C:host cell Golgi apparatus"/>
    <property type="evidence" value="ECO:0007669"/>
    <property type="project" value="UniProtKB-SubCell"/>
</dbReference>
<dbReference type="GO" id="GO:0044423">
    <property type="term" value="C:virion component"/>
    <property type="evidence" value="ECO:0007669"/>
    <property type="project" value="UniProtKB-KW"/>
</dbReference>
<dbReference type="GO" id="GO:0016787">
    <property type="term" value="F:hydrolase activity"/>
    <property type="evidence" value="ECO:0007669"/>
    <property type="project" value="UniProtKB-KW"/>
</dbReference>
<dbReference type="GO" id="GO:0046872">
    <property type="term" value="F:metal ion binding"/>
    <property type="evidence" value="ECO:0007669"/>
    <property type="project" value="UniProtKB-KW"/>
</dbReference>
<dbReference type="GO" id="GO:0001882">
    <property type="term" value="F:nucleoside binding"/>
    <property type="evidence" value="ECO:0007669"/>
    <property type="project" value="InterPro"/>
</dbReference>
<dbReference type="GO" id="GO:0000166">
    <property type="term" value="F:nucleotide binding"/>
    <property type="evidence" value="ECO:0007669"/>
    <property type="project" value="UniProtKB-KW"/>
</dbReference>
<dbReference type="GO" id="GO:0003968">
    <property type="term" value="F:RNA-directed RNA polymerase activity"/>
    <property type="evidence" value="ECO:0007669"/>
    <property type="project" value="UniProtKB-KW"/>
</dbReference>
<dbReference type="GO" id="GO:0006351">
    <property type="term" value="P:DNA-templated transcription"/>
    <property type="evidence" value="ECO:0007669"/>
    <property type="project" value="InterPro"/>
</dbReference>
<dbReference type="GO" id="GO:0039689">
    <property type="term" value="P:negative stranded viral RNA replication"/>
    <property type="evidence" value="ECO:0000250"/>
    <property type="project" value="UniProtKB"/>
</dbReference>
<dbReference type="GO" id="GO:0039696">
    <property type="term" value="P:RNA-templated viral transcription"/>
    <property type="evidence" value="ECO:0000250"/>
    <property type="project" value="UniProtKB"/>
</dbReference>
<dbReference type="InterPro" id="IPR022531">
    <property type="entry name" value="L_PA-C-like"/>
</dbReference>
<dbReference type="InterPro" id="IPR029124">
    <property type="entry name" value="L_protein_N"/>
</dbReference>
<dbReference type="InterPro" id="IPR007099">
    <property type="entry name" value="RNA-dir_pol_NSvirus"/>
</dbReference>
<dbReference type="InterPro" id="IPR014385">
    <property type="entry name" value="RNA-dir_pol_phlebovirus"/>
</dbReference>
<dbReference type="InterPro" id="IPR007322">
    <property type="entry name" value="RNA_pol_bunyavir"/>
</dbReference>
<dbReference type="Pfam" id="PF04196">
    <property type="entry name" value="Bunya_RdRp"/>
    <property type="match status" value="1"/>
</dbReference>
<dbReference type="Pfam" id="PF12603">
    <property type="entry name" value="L_PA-C-like"/>
    <property type="match status" value="1"/>
</dbReference>
<dbReference type="Pfam" id="PF15518">
    <property type="entry name" value="L_protein_N"/>
    <property type="match status" value="1"/>
</dbReference>
<dbReference type="PIRSF" id="PIRSF000826">
    <property type="entry name" value="L_PhleboV"/>
    <property type="match status" value="1"/>
</dbReference>
<dbReference type="PROSITE" id="PS50525">
    <property type="entry name" value="RDRP_SSRNA_NEG_SEG"/>
    <property type="match status" value="1"/>
</dbReference>
<proteinExistence type="evidence at protein level"/>
<evidence type="ECO:0000250" key="1">
    <source>
        <dbReference type="UniProtKB" id="A2SZS3"/>
    </source>
</evidence>
<evidence type="ECO:0000250" key="2">
    <source>
        <dbReference type="UniProtKB" id="A5HC98"/>
    </source>
</evidence>
<evidence type="ECO:0000250" key="3">
    <source>
        <dbReference type="UniProtKB" id="I0DF35"/>
    </source>
</evidence>
<evidence type="ECO:0000250" key="4">
    <source>
        <dbReference type="UniProtKB" id="P20470"/>
    </source>
</evidence>
<evidence type="ECO:0000250" key="5">
    <source>
        <dbReference type="UniProtKB" id="P27316"/>
    </source>
</evidence>
<evidence type="ECO:0000255" key="6">
    <source>
        <dbReference type="PROSITE-ProRule" id="PRU00539"/>
    </source>
</evidence>
<evidence type="ECO:0000269" key="7">
    <source>
    </source>
</evidence>
<evidence type="ECO:0000269" key="8">
    <source>
    </source>
</evidence>
<evidence type="ECO:0000303" key="9">
    <source>
    </source>
</evidence>
<evidence type="ECO:0000305" key="10"/>
<evidence type="ECO:0000305" key="11">
    <source>
    </source>
</evidence>
<evidence type="ECO:0007744" key="12">
    <source>
        <dbReference type="PDB" id="6QVV"/>
    </source>
</evidence>
<evidence type="ECO:0007744" key="13">
    <source>
        <dbReference type="PDB" id="6QW0"/>
    </source>
</evidence>
<evidence type="ECO:0007744" key="14">
    <source>
        <dbReference type="PDB" id="6QW5"/>
    </source>
</evidence>
<evidence type="ECO:0007829" key="15">
    <source>
        <dbReference type="PDB" id="6QW0"/>
    </source>
</evidence>
<evidence type="ECO:0007829" key="16">
    <source>
        <dbReference type="PDB" id="6QW5"/>
    </source>
</evidence>